<accession>P0CL62</accession>
<accession>L0T8I4</accession>
<evidence type="ECO:0000250" key="1">
    <source>
        <dbReference type="UniProtKB" id="P9WIH9"/>
    </source>
</evidence>
<evidence type="ECO:0000256" key="2">
    <source>
        <dbReference type="SAM" id="MobiDB-lite"/>
    </source>
</evidence>
<evidence type="ECO:0000269" key="3">
    <source>
    </source>
</evidence>
<evidence type="ECO:0000269" key="4">
    <source>
    </source>
</evidence>
<evidence type="ECO:0000303" key="5">
    <source>
    </source>
</evidence>
<evidence type="ECO:0000305" key="6"/>
<evidence type="ECO:0007829" key="7">
    <source>
        <dbReference type="PDB" id="6A6X"/>
    </source>
</evidence>
<evidence type="ECO:0007829" key="8">
    <source>
        <dbReference type="PDB" id="7DU4"/>
    </source>
</evidence>
<name>MAZF7_MYCTU</name>
<gene>
    <name type="primary">mazF7</name>
    <name type="ordered locus">Rv2063A</name>
</gene>
<comment type="function">
    <text evidence="1 3 4">Toxic component of a type II toxin-antitoxin (TA) system. Upon expression in E.coli and M.smegmatis inhibits cell growth and colony formation. Its toxic effect is neutralized by coexpression with cognate antitoxin MazE7 (PubMed:19016878, PubMed:20011113). Probably an endoribonuclease (By similarity).</text>
</comment>
<comment type="subunit">
    <text evidence="1">Forms a complex with cognate antitoxin MazE7.</text>
</comment>
<comment type="similarity">
    <text evidence="6">Belongs to the PemK/MazF family.</text>
</comment>
<sequence length="136" mass="14235">MAEPRRGDLWLVSLGAARAGEPGKHRPAVVVSVDELLTGIDDELVVVVPVSSSRSRTPLRPPVAPSEGVAADSVAVCRGVRAVARARLVERLGALKPATMRAIENALTLILGLPTGPERGEAATHSPVRWTGGRDP</sequence>
<protein>
    <recommendedName>
        <fullName evidence="6">Probable endoribonuclease MazF7</fullName>
        <ecNumber>3.1.-.-</ecNumber>
    </recommendedName>
    <alternativeName>
        <fullName evidence="5">Toxin MazF7</fullName>
    </alternativeName>
</protein>
<organism>
    <name type="scientific">Mycobacterium tuberculosis (strain ATCC 25618 / H37Rv)</name>
    <dbReference type="NCBI Taxonomy" id="83332"/>
    <lineage>
        <taxon>Bacteria</taxon>
        <taxon>Bacillati</taxon>
        <taxon>Actinomycetota</taxon>
        <taxon>Actinomycetes</taxon>
        <taxon>Mycobacteriales</taxon>
        <taxon>Mycobacteriaceae</taxon>
        <taxon>Mycobacterium</taxon>
        <taxon>Mycobacterium tuberculosis complex</taxon>
    </lineage>
</organism>
<feature type="chain" id="PRO_0000406308" description="Probable endoribonuclease MazF7">
    <location>
        <begin position="1"/>
        <end position="136"/>
    </location>
</feature>
<feature type="region of interest" description="Disordered" evidence="2">
    <location>
        <begin position="115"/>
        <end position="136"/>
    </location>
</feature>
<feature type="strand" evidence="7">
    <location>
        <begin position="1"/>
        <end position="3"/>
    </location>
</feature>
<feature type="strand" evidence="8">
    <location>
        <begin position="8"/>
        <end position="13"/>
    </location>
</feature>
<feature type="strand" evidence="8">
    <location>
        <begin position="25"/>
        <end position="30"/>
    </location>
</feature>
<feature type="helix" evidence="8">
    <location>
        <begin position="34"/>
        <end position="36"/>
    </location>
</feature>
<feature type="strand" evidence="8">
    <location>
        <begin position="44"/>
        <end position="54"/>
    </location>
</feature>
<feature type="helix" evidence="8">
    <location>
        <begin position="65"/>
        <end position="67"/>
    </location>
</feature>
<feature type="strand" evidence="8">
    <location>
        <begin position="73"/>
        <end position="75"/>
    </location>
</feature>
<feature type="helix" evidence="8">
    <location>
        <begin position="77"/>
        <end position="79"/>
    </location>
</feature>
<feature type="strand" evidence="8">
    <location>
        <begin position="81"/>
        <end position="84"/>
    </location>
</feature>
<feature type="helix" evidence="8">
    <location>
        <begin position="85"/>
        <end position="87"/>
    </location>
</feature>
<feature type="strand" evidence="8">
    <location>
        <begin position="88"/>
        <end position="94"/>
    </location>
</feature>
<feature type="helix" evidence="8">
    <location>
        <begin position="97"/>
        <end position="110"/>
    </location>
</feature>
<proteinExistence type="evidence at protein level"/>
<dbReference type="EC" id="3.1.-.-"/>
<dbReference type="EMBL" id="AL123456">
    <property type="protein sequence ID" value="CCP44837.1"/>
    <property type="molecule type" value="Genomic_DNA"/>
</dbReference>
<dbReference type="RefSeq" id="WP_003410654.1">
    <property type="nucleotide sequence ID" value="NZ_NVQJ01000047.1"/>
</dbReference>
<dbReference type="RefSeq" id="YP_004837055.2">
    <property type="nucleotide sequence ID" value="NC_000962.3"/>
</dbReference>
<dbReference type="PDB" id="5WYG">
    <property type="method" value="X-ray"/>
    <property type="resolution" value="2.36 A"/>
    <property type="chains" value="A/C=1-136"/>
</dbReference>
<dbReference type="PDB" id="6A6X">
    <property type="method" value="X-ray"/>
    <property type="resolution" value="2.70 A"/>
    <property type="chains" value="A/B=1-136"/>
</dbReference>
<dbReference type="PDB" id="7DU4">
    <property type="method" value="X-ray"/>
    <property type="resolution" value="2.18 A"/>
    <property type="chains" value="A/B=2-136"/>
</dbReference>
<dbReference type="PDBsum" id="5WYG"/>
<dbReference type="PDBsum" id="6A6X"/>
<dbReference type="PDBsum" id="7DU4"/>
<dbReference type="SMR" id="P0CL62"/>
<dbReference type="STRING" id="83332.Rv2063A"/>
<dbReference type="PaxDb" id="83332-Rv2063A"/>
<dbReference type="GeneID" id="14515888"/>
<dbReference type="KEGG" id="mtu:Rv2063A"/>
<dbReference type="KEGG" id="mtv:RVBD_2063A"/>
<dbReference type="TubercuList" id="Rv2063A"/>
<dbReference type="eggNOG" id="COG2337">
    <property type="taxonomic scope" value="Bacteria"/>
</dbReference>
<dbReference type="InParanoid" id="P0CL62"/>
<dbReference type="OrthoDB" id="4729354at2"/>
<dbReference type="Proteomes" id="UP000001584">
    <property type="component" value="Chromosome"/>
</dbReference>
<dbReference type="GO" id="GO:0003677">
    <property type="term" value="F:DNA binding"/>
    <property type="evidence" value="ECO:0007669"/>
    <property type="project" value="InterPro"/>
</dbReference>
<dbReference type="GO" id="GO:0004521">
    <property type="term" value="F:RNA endonuclease activity"/>
    <property type="evidence" value="ECO:0000314"/>
    <property type="project" value="MTBBASE"/>
</dbReference>
<dbReference type="GO" id="GO:0006402">
    <property type="term" value="P:mRNA catabolic process"/>
    <property type="evidence" value="ECO:0000318"/>
    <property type="project" value="GO_Central"/>
</dbReference>
<dbReference type="GO" id="GO:0045926">
    <property type="term" value="P:negative regulation of growth"/>
    <property type="evidence" value="ECO:0000315"/>
    <property type="project" value="MTBBASE"/>
</dbReference>
<dbReference type="GO" id="GO:0017148">
    <property type="term" value="P:negative regulation of translation"/>
    <property type="evidence" value="ECO:0000314"/>
    <property type="project" value="MTBBASE"/>
</dbReference>
<dbReference type="GO" id="GO:0016075">
    <property type="term" value="P:rRNA catabolic process"/>
    <property type="evidence" value="ECO:0000318"/>
    <property type="project" value="GO_Central"/>
</dbReference>
<dbReference type="GO" id="GO:0044003">
    <property type="term" value="P:symbiont-mediated perturbation of host process"/>
    <property type="evidence" value="ECO:0000315"/>
    <property type="project" value="MTBBASE"/>
</dbReference>
<dbReference type="Gene3D" id="2.30.30.110">
    <property type="match status" value="1"/>
</dbReference>
<dbReference type="InterPro" id="IPR003477">
    <property type="entry name" value="PemK-like"/>
</dbReference>
<dbReference type="InterPro" id="IPR011067">
    <property type="entry name" value="Plasmid_toxin/cell-grow_inhib"/>
</dbReference>
<dbReference type="PANTHER" id="PTHR33988">
    <property type="entry name" value="ENDORIBONUCLEASE MAZF-RELATED"/>
    <property type="match status" value="1"/>
</dbReference>
<dbReference type="PANTHER" id="PTHR33988:SF1">
    <property type="entry name" value="ENDORIBONUCLEASE MAZF7-RELATED"/>
    <property type="match status" value="1"/>
</dbReference>
<dbReference type="Pfam" id="PF02452">
    <property type="entry name" value="PemK_toxin"/>
    <property type="match status" value="1"/>
</dbReference>
<dbReference type="PIRSF" id="PIRSF033490">
    <property type="entry name" value="MazF"/>
    <property type="match status" value="1"/>
</dbReference>
<dbReference type="SUPFAM" id="SSF50118">
    <property type="entry name" value="Cell growth inhibitor/plasmid maintenance toxic component"/>
    <property type="match status" value="1"/>
</dbReference>
<reference key="1">
    <citation type="journal article" date="1998" name="Nature">
        <title>Deciphering the biology of Mycobacterium tuberculosis from the complete genome sequence.</title>
        <authorList>
            <person name="Cole S.T."/>
            <person name="Brosch R."/>
            <person name="Parkhill J."/>
            <person name="Garnier T."/>
            <person name="Churcher C.M."/>
            <person name="Harris D.E."/>
            <person name="Gordon S.V."/>
            <person name="Eiglmeier K."/>
            <person name="Gas S."/>
            <person name="Barry C.E. III"/>
            <person name="Tekaia F."/>
            <person name="Badcock K."/>
            <person name="Basham D."/>
            <person name="Brown D."/>
            <person name="Chillingworth T."/>
            <person name="Connor R."/>
            <person name="Davies R.M."/>
            <person name="Devlin K."/>
            <person name="Feltwell T."/>
            <person name="Gentles S."/>
            <person name="Hamlin N."/>
            <person name="Holroyd S."/>
            <person name="Hornsby T."/>
            <person name="Jagels K."/>
            <person name="Krogh A."/>
            <person name="McLean J."/>
            <person name="Moule S."/>
            <person name="Murphy L.D."/>
            <person name="Oliver S."/>
            <person name="Osborne J."/>
            <person name="Quail M.A."/>
            <person name="Rajandream M.A."/>
            <person name="Rogers J."/>
            <person name="Rutter S."/>
            <person name="Seeger K."/>
            <person name="Skelton S."/>
            <person name="Squares S."/>
            <person name="Squares R."/>
            <person name="Sulston J.E."/>
            <person name="Taylor K."/>
            <person name="Whitehead S."/>
            <person name="Barrell B.G."/>
        </authorList>
    </citation>
    <scope>NUCLEOTIDE SEQUENCE [LARGE SCALE GENOMIC DNA]</scope>
    <source>
        <strain>ATCC 25618 / H37Rv</strain>
    </source>
</reference>
<reference key="2">
    <citation type="journal article" date="2005" name="Nucleic Acids Res.">
        <title>Toxin-antitoxin loci are highly abundant in free-living but lost from host-associated prokaryotes.</title>
        <authorList>
            <person name="Pandey D.P."/>
            <person name="Gerdes K."/>
        </authorList>
    </citation>
    <scope>IDENTIFICATION</scope>
    <scope>POSSIBLE FUNCTION</scope>
    <source>
        <strain>ATCC 25618 / H37Rv</strain>
    </source>
</reference>
<reference key="3">
    <citation type="journal article" date="2009" name="FEMS Microbiol. Lett.">
        <title>Killing activity and rescue function of genome-wide toxin-antitoxin loci of Mycobacterium tuberculosis.</title>
        <authorList>
            <person name="Gupta A."/>
        </authorList>
    </citation>
    <scope>EXPRESSION IN E.COLI</scope>
    <scope>FUNCTION AS A TOXIN</scope>
    <source>
        <strain>ATCC 25618 / H37Rv</strain>
    </source>
</reference>
<reference key="4">
    <citation type="journal article" date="2009" name="PLoS Genet.">
        <title>Comprehensive functional analysis of Mycobacterium tuberculosis toxin-antitoxin systems: implications for pathogenesis, stress responses, and evolution.</title>
        <authorList>
            <person name="Ramage H.R."/>
            <person name="Connolly L.E."/>
            <person name="Cox J.S."/>
        </authorList>
    </citation>
    <scope>EXPRESSION IN M.SMEGMATIS</scope>
    <scope>FUNCTION AS A TOXIN</scope>
    <source>
        <strain>ATCC 35801 / TMC 107 / Erdman</strain>
    </source>
</reference>
<keyword id="KW-0002">3D-structure</keyword>
<keyword id="KW-0255">Endonuclease</keyword>
<keyword id="KW-0378">Hydrolase</keyword>
<keyword id="KW-0540">Nuclease</keyword>
<keyword id="KW-1185">Reference proteome</keyword>
<keyword id="KW-1277">Toxin-antitoxin system</keyword>